<comment type="function">
    <text evidence="1">Probably deamidates glutamine residues to glutamate on methyl-accepting chemotaxis receptors (MCPs), playing an important role in chemotaxis.</text>
</comment>
<comment type="catalytic activity">
    <reaction evidence="1">
        <text>L-glutaminyl-[protein] + H2O = L-glutamyl-[protein] + NH4(+)</text>
        <dbReference type="Rhea" id="RHEA:16441"/>
        <dbReference type="Rhea" id="RHEA-COMP:10207"/>
        <dbReference type="Rhea" id="RHEA-COMP:10208"/>
        <dbReference type="ChEBI" id="CHEBI:15377"/>
        <dbReference type="ChEBI" id="CHEBI:28938"/>
        <dbReference type="ChEBI" id="CHEBI:29973"/>
        <dbReference type="ChEBI" id="CHEBI:30011"/>
        <dbReference type="EC" id="3.5.1.44"/>
    </reaction>
</comment>
<comment type="similarity">
    <text evidence="1">Belongs to the CheD family.</text>
</comment>
<keyword id="KW-0145">Chemotaxis</keyword>
<keyword id="KW-0378">Hydrolase</keyword>
<keyword id="KW-1185">Reference proteome</keyword>
<protein>
    <recommendedName>
        <fullName evidence="1">Probable chemoreceptor glutamine deamidase CheD 1</fullName>
        <ecNumber evidence="1">3.5.1.44</ecNumber>
    </recommendedName>
</protein>
<evidence type="ECO:0000255" key="1">
    <source>
        <dbReference type="HAMAP-Rule" id="MF_01440"/>
    </source>
</evidence>
<sequence length="166" mass="19122">MILEPDTVIDLFLQPGGFYWGKGNIRIRTLLGSCVSICFWHPSLLYGGMAHVMLPFRPSSIHSDDSLNAKYAEDAFQLFFEKLEGFKKQYQIKLFGGASMFSTEEEKLLELKSVRDIGMKNILSIKEHLIRNQLLISSEDLGGFSHRRIFFSLWDGEIYVERPEHT</sequence>
<proteinExistence type="inferred from homology"/>
<feature type="chain" id="PRO_0000251040" description="Probable chemoreceptor glutamine deamidase CheD 1">
    <location>
        <begin position="1"/>
        <end position="166"/>
    </location>
</feature>
<gene>
    <name evidence="1" type="primary">cheD1</name>
    <name type="ordered locus">LA_2428</name>
</gene>
<name>CHED1_LEPIN</name>
<organism>
    <name type="scientific">Leptospira interrogans serogroup Icterohaemorrhagiae serovar Lai (strain 56601)</name>
    <dbReference type="NCBI Taxonomy" id="189518"/>
    <lineage>
        <taxon>Bacteria</taxon>
        <taxon>Pseudomonadati</taxon>
        <taxon>Spirochaetota</taxon>
        <taxon>Spirochaetia</taxon>
        <taxon>Leptospirales</taxon>
        <taxon>Leptospiraceae</taxon>
        <taxon>Leptospira</taxon>
    </lineage>
</organism>
<accession>Q8F3H5</accession>
<reference key="1">
    <citation type="journal article" date="2003" name="Nature">
        <title>Unique physiological and pathogenic features of Leptospira interrogans revealed by whole-genome sequencing.</title>
        <authorList>
            <person name="Ren S.-X."/>
            <person name="Fu G."/>
            <person name="Jiang X.-G."/>
            <person name="Zeng R."/>
            <person name="Miao Y.-G."/>
            <person name="Xu H."/>
            <person name="Zhang Y.-X."/>
            <person name="Xiong H."/>
            <person name="Lu G."/>
            <person name="Lu L.-F."/>
            <person name="Jiang H.-Q."/>
            <person name="Jia J."/>
            <person name="Tu Y.-F."/>
            <person name="Jiang J.-X."/>
            <person name="Gu W.-Y."/>
            <person name="Zhang Y.-Q."/>
            <person name="Cai Z."/>
            <person name="Sheng H.-H."/>
            <person name="Yin H.-F."/>
            <person name="Zhang Y."/>
            <person name="Zhu G.-F."/>
            <person name="Wan M."/>
            <person name="Huang H.-L."/>
            <person name="Qian Z."/>
            <person name="Wang S.-Y."/>
            <person name="Ma W."/>
            <person name="Yao Z.-J."/>
            <person name="Shen Y."/>
            <person name="Qiang B.-Q."/>
            <person name="Xia Q.-C."/>
            <person name="Guo X.-K."/>
            <person name="Danchin A."/>
            <person name="Saint Girons I."/>
            <person name="Somerville R.L."/>
            <person name="Wen Y.-M."/>
            <person name="Shi M.-H."/>
            <person name="Chen Z."/>
            <person name="Xu J.-G."/>
            <person name="Zhao G.-P."/>
        </authorList>
    </citation>
    <scope>NUCLEOTIDE SEQUENCE [LARGE SCALE GENOMIC DNA]</scope>
    <source>
        <strain>56601</strain>
    </source>
</reference>
<dbReference type="EC" id="3.5.1.44" evidence="1"/>
<dbReference type="EMBL" id="AE010300">
    <property type="protein sequence ID" value="AAN49627.1"/>
    <property type="molecule type" value="Genomic_DNA"/>
</dbReference>
<dbReference type="RefSeq" id="NP_712609.1">
    <property type="nucleotide sequence ID" value="NC_004342.2"/>
</dbReference>
<dbReference type="RefSeq" id="WP_000599744.1">
    <property type="nucleotide sequence ID" value="NC_004342.2"/>
</dbReference>
<dbReference type="SMR" id="Q8F3H5"/>
<dbReference type="STRING" id="189518.LA_2428"/>
<dbReference type="PaxDb" id="189518-LA_2428"/>
<dbReference type="EnsemblBacteria" id="AAN49627">
    <property type="protein sequence ID" value="AAN49627"/>
    <property type="gene ID" value="LA_2428"/>
</dbReference>
<dbReference type="KEGG" id="lil:LA_2428"/>
<dbReference type="PATRIC" id="fig|189518.3.peg.2408"/>
<dbReference type="HOGENOM" id="CLU_087854_1_1_12"/>
<dbReference type="InParanoid" id="Q8F3H5"/>
<dbReference type="OrthoDB" id="9807202at2"/>
<dbReference type="Proteomes" id="UP000001408">
    <property type="component" value="Chromosome I"/>
</dbReference>
<dbReference type="GO" id="GO:0050568">
    <property type="term" value="F:protein-glutamine glutaminase activity"/>
    <property type="evidence" value="ECO:0007669"/>
    <property type="project" value="UniProtKB-UniRule"/>
</dbReference>
<dbReference type="GO" id="GO:0006935">
    <property type="term" value="P:chemotaxis"/>
    <property type="evidence" value="ECO:0007669"/>
    <property type="project" value="UniProtKB-UniRule"/>
</dbReference>
<dbReference type="CDD" id="cd16352">
    <property type="entry name" value="CheD"/>
    <property type="match status" value="1"/>
</dbReference>
<dbReference type="Gene3D" id="3.30.1330.200">
    <property type="match status" value="1"/>
</dbReference>
<dbReference type="HAMAP" id="MF_01440">
    <property type="entry name" value="CheD"/>
    <property type="match status" value="1"/>
</dbReference>
<dbReference type="InterPro" id="IPR038592">
    <property type="entry name" value="CheD-like_sf"/>
</dbReference>
<dbReference type="InterPro" id="IPR005659">
    <property type="entry name" value="Chemorcpt_Glu_NH3ase_CheD"/>
</dbReference>
<dbReference type="InterPro" id="IPR011324">
    <property type="entry name" value="Cytotoxic_necrot_fac-like_cat"/>
</dbReference>
<dbReference type="PANTHER" id="PTHR35147:SF3">
    <property type="entry name" value="CHEMORECEPTOR GLUTAMINE DEAMIDASE CHED 1-RELATED"/>
    <property type="match status" value="1"/>
</dbReference>
<dbReference type="PANTHER" id="PTHR35147">
    <property type="entry name" value="CHEMORECEPTOR GLUTAMINE DEAMIDASE CHED-RELATED"/>
    <property type="match status" value="1"/>
</dbReference>
<dbReference type="Pfam" id="PF03975">
    <property type="entry name" value="CheD"/>
    <property type="match status" value="1"/>
</dbReference>
<dbReference type="SUPFAM" id="SSF64438">
    <property type="entry name" value="CNF1/YfiH-like putative cysteine hydrolases"/>
    <property type="match status" value="1"/>
</dbReference>